<feature type="chain" id="PRO_0000352440" description="Uncharacterized protein DDB_G0279687">
    <location>
        <begin position="1"/>
        <end position="89"/>
    </location>
</feature>
<feature type="region of interest" description="Disordered" evidence="1">
    <location>
        <begin position="31"/>
        <end position="89"/>
    </location>
</feature>
<feature type="compositionally biased region" description="Basic and acidic residues" evidence="1">
    <location>
        <begin position="36"/>
        <end position="58"/>
    </location>
</feature>
<feature type="compositionally biased region" description="Pro residues" evidence="1">
    <location>
        <begin position="59"/>
        <end position="69"/>
    </location>
</feature>
<accession>Q54WF3</accession>
<proteinExistence type="predicted"/>
<reference key="1">
    <citation type="journal article" date="2005" name="Nature">
        <title>The genome of the social amoeba Dictyostelium discoideum.</title>
        <authorList>
            <person name="Eichinger L."/>
            <person name="Pachebat J.A."/>
            <person name="Gloeckner G."/>
            <person name="Rajandream M.A."/>
            <person name="Sucgang R."/>
            <person name="Berriman M."/>
            <person name="Song J."/>
            <person name="Olsen R."/>
            <person name="Szafranski K."/>
            <person name="Xu Q."/>
            <person name="Tunggal B."/>
            <person name="Kummerfeld S."/>
            <person name="Madera M."/>
            <person name="Konfortov B.A."/>
            <person name="Rivero F."/>
            <person name="Bankier A.T."/>
            <person name="Lehmann R."/>
            <person name="Hamlin N."/>
            <person name="Davies R."/>
            <person name="Gaudet P."/>
            <person name="Fey P."/>
            <person name="Pilcher K."/>
            <person name="Chen G."/>
            <person name="Saunders D."/>
            <person name="Sodergren E.J."/>
            <person name="Davis P."/>
            <person name="Kerhornou A."/>
            <person name="Nie X."/>
            <person name="Hall N."/>
            <person name="Anjard C."/>
            <person name="Hemphill L."/>
            <person name="Bason N."/>
            <person name="Farbrother P."/>
            <person name="Desany B."/>
            <person name="Just E."/>
            <person name="Morio T."/>
            <person name="Rost R."/>
            <person name="Churcher C.M."/>
            <person name="Cooper J."/>
            <person name="Haydock S."/>
            <person name="van Driessche N."/>
            <person name="Cronin A."/>
            <person name="Goodhead I."/>
            <person name="Muzny D.M."/>
            <person name="Mourier T."/>
            <person name="Pain A."/>
            <person name="Lu M."/>
            <person name="Harper D."/>
            <person name="Lindsay R."/>
            <person name="Hauser H."/>
            <person name="James K.D."/>
            <person name="Quiles M."/>
            <person name="Madan Babu M."/>
            <person name="Saito T."/>
            <person name="Buchrieser C."/>
            <person name="Wardroper A."/>
            <person name="Felder M."/>
            <person name="Thangavelu M."/>
            <person name="Johnson D."/>
            <person name="Knights A."/>
            <person name="Loulseged H."/>
            <person name="Mungall K.L."/>
            <person name="Oliver K."/>
            <person name="Price C."/>
            <person name="Quail M.A."/>
            <person name="Urushihara H."/>
            <person name="Hernandez J."/>
            <person name="Rabbinowitsch E."/>
            <person name="Steffen D."/>
            <person name="Sanders M."/>
            <person name="Ma J."/>
            <person name="Kohara Y."/>
            <person name="Sharp S."/>
            <person name="Simmonds M.N."/>
            <person name="Spiegler S."/>
            <person name="Tivey A."/>
            <person name="Sugano S."/>
            <person name="White B."/>
            <person name="Walker D."/>
            <person name="Woodward J.R."/>
            <person name="Winckler T."/>
            <person name="Tanaka Y."/>
            <person name="Shaulsky G."/>
            <person name="Schleicher M."/>
            <person name="Weinstock G.M."/>
            <person name="Rosenthal A."/>
            <person name="Cox E.C."/>
            <person name="Chisholm R.L."/>
            <person name="Gibbs R.A."/>
            <person name="Loomis W.F."/>
            <person name="Platzer M."/>
            <person name="Kay R.R."/>
            <person name="Williams J.G."/>
            <person name="Dear P.H."/>
            <person name="Noegel A.A."/>
            <person name="Barrell B.G."/>
            <person name="Kuspa A."/>
        </authorList>
    </citation>
    <scope>NUCLEOTIDE SEQUENCE [LARGE SCALE GENOMIC DNA]</scope>
    <source>
        <strain>AX4</strain>
    </source>
</reference>
<dbReference type="EMBL" id="AAFI02000032">
    <property type="protein sequence ID" value="EAL67618.1"/>
    <property type="molecule type" value="Genomic_DNA"/>
</dbReference>
<dbReference type="RefSeq" id="XP_641600.1">
    <property type="nucleotide sequence ID" value="XM_636508.1"/>
</dbReference>
<dbReference type="FunCoup" id="Q54WF3">
    <property type="interactions" value="642"/>
</dbReference>
<dbReference type="PaxDb" id="44689-DDB0205987"/>
<dbReference type="EnsemblProtists" id="EAL67618">
    <property type="protein sequence ID" value="EAL67618"/>
    <property type="gene ID" value="DDB_G0279687"/>
</dbReference>
<dbReference type="GeneID" id="8622176"/>
<dbReference type="KEGG" id="ddi:DDB_G0279687"/>
<dbReference type="dictyBase" id="DDB_G0279687"/>
<dbReference type="VEuPathDB" id="AmoebaDB:DDB_G0279687"/>
<dbReference type="eggNOG" id="ENOG502RIKP">
    <property type="taxonomic scope" value="Eukaryota"/>
</dbReference>
<dbReference type="HOGENOM" id="CLU_2459415_0_0_1"/>
<dbReference type="InParanoid" id="Q54WF3"/>
<dbReference type="PRO" id="PR:Q54WF3"/>
<dbReference type="Proteomes" id="UP000002195">
    <property type="component" value="Chromosome 3"/>
</dbReference>
<gene>
    <name type="ORF">DDB_G0279687</name>
</gene>
<organism>
    <name type="scientific">Dictyostelium discoideum</name>
    <name type="common">Social amoeba</name>
    <dbReference type="NCBI Taxonomy" id="44689"/>
    <lineage>
        <taxon>Eukaryota</taxon>
        <taxon>Amoebozoa</taxon>
        <taxon>Evosea</taxon>
        <taxon>Eumycetozoa</taxon>
        <taxon>Dictyostelia</taxon>
        <taxon>Dictyosteliales</taxon>
        <taxon>Dictyosteliaceae</taxon>
        <taxon>Dictyostelium</taxon>
    </lineage>
</organism>
<name>Y0598_DICDI</name>
<keyword id="KW-1185">Reference proteome</keyword>
<protein>
    <recommendedName>
        <fullName>Uncharacterized protein DDB_G0279687</fullName>
    </recommendedName>
</protein>
<sequence>MNIIKSKTGNFKFISRIGILNYKRCFTTVKTPQPLEPHEHPKPMEPNEFDPKPDDPPRNPDPSPFPNEVPKPKPSDFPIPDELYPQPIV</sequence>
<evidence type="ECO:0000256" key="1">
    <source>
        <dbReference type="SAM" id="MobiDB-lite"/>
    </source>
</evidence>